<dbReference type="EC" id="3.1.2.-" evidence="2"/>
<dbReference type="EMBL" id="JX878393">
    <property type="protein sequence ID" value="AGA17933.1"/>
    <property type="molecule type" value="mRNA"/>
</dbReference>
<dbReference type="SMR" id="S4TE15"/>
<dbReference type="GO" id="GO:0009507">
    <property type="term" value="C:chloroplast"/>
    <property type="evidence" value="ECO:0007669"/>
    <property type="project" value="UniProtKB-SubCell"/>
</dbReference>
<dbReference type="GO" id="GO:0016297">
    <property type="term" value="F:fatty acyl-[ACP] hydrolase activity"/>
    <property type="evidence" value="ECO:0007669"/>
    <property type="project" value="TreeGrafter"/>
</dbReference>
<dbReference type="GO" id="GO:0006629">
    <property type="term" value="P:lipid metabolic process"/>
    <property type="evidence" value="ECO:0007669"/>
    <property type="project" value="UniProtKB-KW"/>
</dbReference>
<dbReference type="CDD" id="cd00586">
    <property type="entry name" value="4HBT"/>
    <property type="match status" value="1"/>
</dbReference>
<dbReference type="FunFam" id="3.10.129.10:FF:000037">
    <property type="entry name" value="acyl-acyl carrier protein thioesterase ATL3, chloroplastic"/>
    <property type="match status" value="1"/>
</dbReference>
<dbReference type="Gene3D" id="3.10.129.10">
    <property type="entry name" value="Hotdog Thioesterase"/>
    <property type="match status" value="1"/>
</dbReference>
<dbReference type="InterPro" id="IPR050563">
    <property type="entry name" value="4-hydroxybenzoyl-CoA_TE"/>
</dbReference>
<dbReference type="InterPro" id="IPR029069">
    <property type="entry name" value="HotDog_dom_sf"/>
</dbReference>
<dbReference type="PANTHER" id="PTHR31793">
    <property type="entry name" value="4-HYDROXYBENZOYL-COA THIOESTERASE FAMILY MEMBER"/>
    <property type="match status" value="1"/>
</dbReference>
<dbReference type="PANTHER" id="PTHR31793:SF27">
    <property type="entry name" value="NOVEL THIOESTERASE SUPERFAMILY DOMAIN AND SAPOSIN A-TYPE DOMAIN CONTAINING PROTEIN (0610012H03RIK)"/>
    <property type="match status" value="1"/>
</dbReference>
<dbReference type="Pfam" id="PF13279">
    <property type="entry name" value="4HBT_2"/>
    <property type="match status" value="1"/>
</dbReference>
<dbReference type="SUPFAM" id="SSF54637">
    <property type="entry name" value="Thioesterase/thiol ester dehydrase-isomerase"/>
    <property type="match status" value="1"/>
</dbReference>
<proteinExistence type="evidence at transcript level"/>
<organism>
    <name type="scientific">Humulus lupulus</name>
    <name type="common">European hop</name>
    <dbReference type="NCBI Taxonomy" id="3486"/>
    <lineage>
        <taxon>Eukaryota</taxon>
        <taxon>Viridiplantae</taxon>
        <taxon>Streptophyta</taxon>
        <taxon>Embryophyta</taxon>
        <taxon>Tracheophyta</taxon>
        <taxon>Spermatophyta</taxon>
        <taxon>Magnoliopsida</taxon>
        <taxon>eudicotyledons</taxon>
        <taxon>Gunneridae</taxon>
        <taxon>Pentapetalae</taxon>
        <taxon>rosids</taxon>
        <taxon>fabids</taxon>
        <taxon>Rosales</taxon>
        <taxon>Cannabaceae</taxon>
        <taxon>Humulus</taxon>
    </lineage>
</organism>
<sequence>MLQTFSPSYKPLHLPISSLSLSSSSSSSASSVAFPVTRLLIPPRLRVLPNPRRRCSALPFDIRGGKGMSEFYEVELKVRDYELDQYGVVNNAVYASYCQHGRHELLESFGLSCDAVARNGDALALSELSLKFLAPLRSGDKFVVKVRLSGSSAARLYFDHLIFKLPNQEPILDAKGTAVWLDKNYRPVRIPPEVRSKLVQFLRNEES</sequence>
<accession>S4TE15</accession>
<name>TE3_HUMLU</name>
<keyword id="KW-0150">Chloroplast</keyword>
<keyword id="KW-0378">Hydrolase</keyword>
<keyword id="KW-0443">Lipid metabolism</keyword>
<keyword id="KW-0934">Plastid</keyword>
<keyword id="KW-0809">Transit peptide</keyword>
<feature type="transit peptide" description="Chloroplast" evidence="3">
    <location>
        <begin position="1"/>
        <end position="63"/>
    </location>
</feature>
<feature type="chain" id="PRO_0000452960" description="Acyl-acyl carrier protein thioesterase TE3, chloroplastic">
    <location>
        <begin position="64"/>
        <end position="207"/>
    </location>
</feature>
<feature type="active site" evidence="1 2">
    <location>
        <position position="84"/>
    </location>
</feature>
<reference key="1">
    <citation type="journal article" date="2013" name="Mol. Plant">
        <title>Characterization of the formation of branched short-chain fatty acid:CoAs for bitter acid biosynthesis in hop glandular trichomes.</title>
        <authorList>
            <person name="Xu H."/>
            <person name="Zhang F."/>
            <person name="Liu B."/>
            <person name="Huhman D.V."/>
            <person name="Sumner L.W."/>
            <person name="Dixon R.A."/>
            <person name="Wang G."/>
        </authorList>
    </citation>
    <scope>NUCLEOTIDE SEQUENCE [MRNA]</scope>
    <scope>TISSUE SPECIFICITY</scope>
    <scope>GENE FAMILY</scope>
    <scope>NOMENCLATURE</scope>
    <source>
        <strain>cv. Nugget</strain>
    </source>
</reference>
<comment type="function">
    <text evidence="2">Acyl-ACP thioesterase involved in the production of fatty acids and beta-keto fatty acids (By similarity). May play a role in cuticular wax synthesis (By similarity).</text>
</comment>
<comment type="subcellular location">
    <subcellularLocation>
        <location evidence="3">Plastid</location>
        <location evidence="3">Chloroplast</location>
    </subcellularLocation>
</comment>
<comment type="tissue specificity">
    <text evidence="4">Mostly expressed at low levels in glandular trichomes (lupulin glands), and, to a lower extent, in stems, leaves, flowers and cones.</text>
</comment>
<comment type="similarity">
    <text evidence="6">Belongs to the 4-hydroxybenzoyl-CoA thioesterase family.</text>
</comment>
<protein>
    <recommendedName>
        <fullName evidence="5">Acyl-acyl carrier protein thioesterase TE3, chloroplastic</fullName>
        <shortName evidence="5">HlTE3</shortName>
        <ecNumber evidence="2">3.1.2.-</ecNumber>
    </recommendedName>
    <alternativeName>
        <fullName evidence="5">Acyl-ACP thioesterase TE3</fullName>
    </alternativeName>
    <alternativeName>
        <fullName evidence="5">Acyl-lipid thioesterase 3</fullName>
    </alternativeName>
</protein>
<gene>
    <name evidence="5" type="primary">TE3</name>
</gene>
<evidence type="ECO:0000250" key="1">
    <source>
        <dbReference type="UniProtKB" id="P56653"/>
    </source>
</evidence>
<evidence type="ECO:0000250" key="2">
    <source>
        <dbReference type="UniProtKB" id="Q9C7I5"/>
    </source>
</evidence>
<evidence type="ECO:0000255" key="3"/>
<evidence type="ECO:0000269" key="4">
    <source>
    </source>
</evidence>
<evidence type="ECO:0000303" key="5">
    <source>
    </source>
</evidence>
<evidence type="ECO:0000305" key="6"/>